<reference key="1">
    <citation type="submission" date="2003-07" db="EMBL/GenBank/DDBJ databases">
        <authorList>
            <person name="Berger J."/>
        </authorList>
    </citation>
    <scope>NUCLEOTIDE SEQUENCE [MRNA] (ISOFORM 1)</scope>
    <source>
        <tissue>Liver</tissue>
        <tissue>Testis</tissue>
    </source>
</reference>
<reference key="2">
    <citation type="submission" date="2002-01" db="EMBL/GenBank/DDBJ databases">
        <title>The nucleotide sequence of a long cDNA clone isolated from human spleen.</title>
        <authorList>
            <person name="Jikuya H."/>
            <person name="Takano J."/>
            <person name="Nomura N."/>
            <person name="Kikuno R."/>
            <person name="Nagase T."/>
            <person name="Ohara O."/>
        </authorList>
    </citation>
    <scope>NUCLEOTIDE SEQUENCE [LARGE SCALE MRNA] (ISOFORM 3)</scope>
    <source>
        <tissue>Spleen</tissue>
    </source>
</reference>
<reference key="3">
    <citation type="journal article" date="2003" name="Genome Res.">
        <title>The secreted protein discovery initiative (SPDI), a large-scale effort to identify novel human secreted and transmembrane proteins: a bioinformatics assessment.</title>
        <authorList>
            <person name="Clark H.F."/>
            <person name="Gurney A.L."/>
            <person name="Abaya E."/>
            <person name="Baker K."/>
            <person name="Baldwin D.T."/>
            <person name="Brush J."/>
            <person name="Chen J."/>
            <person name="Chow B."/>
            <person name="Chui C."/>
            <person name="Crowley C."/>
            <person name="Currell B."/>
            <person name="Deuel B."/>
            <person name="Dowd P."/>
            <person name="Eaton D."/>
            <person name="Foster J.S."/>
            <person name="Grimaldi C."/>
            <person name="Gu Q."/>
            <person name="Hass P.E."/>
            <person name="Heldens S."/>
            <person name="Huang A."/>
            <person name="Kim H.S."/>
            <person name="Klimowski L."/>
            <person name="Jin Y."/>
            <person name="Johnson S."/>
            <person name="Lee J."/>
            <person name="Lewis L."/>
            <person name="Liao D."/>
            <person name="Mark M.R."/>
            <person name="Robbie E."/>
            <person name="Sanchez C."/>
            <person name="Schoenfeld J."/>
            <person name="Seshagiri S."/>
            <person name="Simmons L."/>
            <person name="Singh J."/>
            <person name="Smith V."/>
            <person name="Stinson J."/>
            <person name="Vagts A."/>
            <person name="Vandlen R.L."/>
            <person name="Watanabe C."/>
            <person name="Wieand D."/>
            <person name="Woods K."/>
            <person name="Xie M.-H."/>
            <person name="Yansura D.G."/>
            <person name="Yi S."/>
            <person name="Yu G."/>
            <person name="Yuan J."/>
            <person name="Zhang M."/>
            <person name="Zhang Z."/>
            <person name="Goddard A.D."/>
            <person name="Wood W.I."/>
            <person name="Godowski P.J."/>
            <person name="Gray A.M."/>
        </authorList>
    </citation>
    <scope>NUCLEOTIDE SEQUENCE [LARGE SCALE MRNA] (ISOFORM 1)</scope>
</reference>
<reference key="4">
    <citation type="journal article" date="2004" name="Nat. Genet.">
        <title>Complete sequencing and characterization of 21,243 full-length human cDNAs.</title>
        <authorList>
            <person name="Ota T."/>
            <person name="Suzuki Y."/>
            <person name="Nishikawa T."/>
            <person name="Otsuki T."/>
            <person name="Sugiyama T."/>
            <person name="Irie R."/>
            <person name="Wakamatsu A."/>
            <person name="Hayashi K."/>
            <person name="Sato H."/>
            <person name="Nagai K."/>
            <person name="Kimura K."/>
            <person name="Makita H."/>
            <person name="Sekine M."/>
            <person name="Obayashi M."/>
            <person name="Nishi T."/>
            <person name="Shibahara T."/>
            <person name="Tanaka T."/>
            <person name="Ishii S."/>
            <person name="Yamamoto J."/>
            <person name="Saito K."/>
            <person name="Kawai Y."/>
            <person name="Isono Y."/>
            <person name="Nakamura Y."/>
            <person name="Nagahari K."/>
            <person name="Murakami K."/>
            <person name="Yasuda T."/>
            <person name="Iwayanagi T."/>
            <person name="Wagatsuma M."/>
            <person name="Shiratori A."/>
            <person name="Sudo H."/>
            <person name="Hosoiri T."/>
            <person name="Kaku Y."/>
            <person name="Kodaira H."/>
            <person name="Kondo H."/>
            <person name="Sugawara M."/>
            <person name="Takahashi M."/>
            <person name="Kanda K."/>
            <person name="Yokoi T."/>
            <person name="Furuya T."/>
            <person name="Kikkawa E."/>
            <person name="Omura Y."/>
            <person name="Abe K."/>
            <person name="Kamihara K."/>
            <person name="Katsuta N."/>
            <person name="Sato K."/>
            <person name="Tanikawa M."/>
            <person name="Yamazaki M."/>
            <person name="Ninomiya K."/>
            <person name="Ishibashi T."/>
            <person name="Yamashita H."/>
            <person name="Murakawa K."/>
            <person name="Fujimori K."/>
            <person name="Tanai H."/>
            <person name="Kimata M."/>
            <person name="Watanabe M."/>
            <person name="Hiraoka S."/>
            <person name="Chiba Y."/>
            <person name="Ishida S."/>
            <person name="Ono Y."/>
            <person name="Takiguchi S."/>
            <person name="Watanabe S."/>
            <person name="Yosida M."/>
            <person name="Hotuta T."/>
            <person name="Kusano J."/>
            <person name="Kanehori K."/>
            <person name="Takahashi-Fujii A."/>
            <person name="Hara H."/>
            <person name="Tanase T.-O."/>
            <person name="Nomura Y."/>
            <person name="Togiya S."/>
            <person name="Komai F."/>
            <person name="Hara R."/>
            <person name="Takeuchi K."/>
            <person name="Arita M."/>
            <person name="Imose N."/>
            <person name="Musashino K."/>
            <person name="Yuuki H."/>
            <person name="Oshima A."/>
            <person name="Sasaki N."/>
            <person name="Aotsuka S."/>
            <person name="Yoshikawa Y."/>
            <person name="Matsunawa H."/>
            <person name="Ichihara T."/>
            <person name="Shiohata N."/>
            <person name="Sano S."/>
            <person name="Moriya S."/>
            <person name="Momiyama H."/>
            <person name="Satoh N."/>
            <person name="Takami S."/>
            <person name="Terashima Y."/>
            <person name="Suzuki O."/>
            <person name="Nakagawa S."/>
            <person name="Senoh A."/>
            <person name="Mizoguchi H."/>
            <person name="Goto Y."/>
            <person name="Shimizu F."/>
            <person name="Wakebe H."/>
            <person name="Hishigaki H."/>
            <person name="Watanabe T."/>
            <person name="Sugiyama A."/>
            <person name="Takemoto M."/>
            <person name="Kawakami B."/>
            <person name="Yamazaki M."/>
            <person name="Watanabe K."/>
            <person name="Kumagai A."/>
            <person name="Itakura S."/>
            <person name="Fukuzumi Y."/>
            <person name="Fujimori Y."/>
            <person name="Komiyama M."/>
            <person name="Tashiro H."/>
            <person name="Tanigami A."/>
            <person name="Fujiwara T."/>
            <person name="Ono T."/>
            <person name="Yamada K."/>
            <person name="Fujii Y."/>
            <person name="Ozaki K."/>
            <person name="Hirao M."/>
            <person name="Ohmori Y."/>
            <person name="Kawabata A."/>
            <person name="Hikiji T."/>
            <person name="Kobatake N."/>
            <person name="Inagaki H."/>
            <person name="Ikema Y."/>
            <person name="Okamoto S."/>
            <person name="Okitani R."/>
            <person name="Kawakami T."/>
            <person name="Noguchi S."/>
            <person name="Itoh T."/>
            <person name="Shigeta K."/>
            <person name="Senba T."/>
            <person name="Matsumura K."/>
            <person name="Nakajima Y."/>
            <person name="Mizuno T."/>
            <person name="Morinaga M."/>
            <person name="Sasaki M."/>
            <person name="Togashi T."/>
            <person name="Oyama M."/>
            <person name="Hata H."/>
            <person name="Watanabe M."/>
            <person name="Komatsu T."/>
            <person name="Mizushima-Sugano J."/>
            <person name="Satoh T."/>
            <person name="Shirai Y."/>
            <person name="Takahashi Y."/>
            <person name="Nakagawa K."/>
            <person name="Okumura K."/>
            <person name="Nagase T."/>
            <person name="Nomura N."/>
            <person name="Kikuchi H."/>
            <person name="Masuho Y."/>
            <person name="Yamashita R."/>
            <person name="Nakai K."/>
            <person name="Yada T."/>
            <person name="Nakamura Y."/>
            <person name="Ohara O."/>
            <person name="Isogai T."/>
            <person name="Sugano S."/>
        </authorList>
    </citation>
    <scope>NUCLEOTIDE SEQUENCE [LARGE SCALE MRNA] (ISOFORM 1)</scope>
    <source>
        <tissue>Neuron</tissue>
        <tissue>Teratocarcinoma</tissue>
        <tissue>Tongue</tissue>
    </source>
</reference>
<reference key="5">
    <citation type="journal article" date="2006" name="Nature">
        <title>The DNA sequence and biological annotation of human chromosome 1.</title>
        <authorList>
            <person name="Gregory S.G."/>
            <person name="Barlow K.F."/>
            <person name="McLay K.E."/>
            <person name="Kaul R."/>
            <person name="Swarbreck D."/>
            <person name="Dunham A."/>
            <person name="Scott C.E."/>
            <person name="Howe K.L."/>
            <person name="Woodfine K."/>
            <person name="Spencer C.C.A."/>
            <person name="Jones M.C."/>
            <person name="Gillson C."/>
            <person name="Searle S."/>
            <person name="Zhou Y."/>
            <person name="Kokocinski F."/>
            <person name="McDonald L."/>
            <person name="Evans R."/>
            <person name="Phillips K."/>
            <person name="Atkinson A."/>
            <person name="Cooper R."/>
            <person name="Jones C."/>
            <person name="Hall R.E."/>
            <person name="Andrews T.D."/>
            <person name="Lloyd C."/>
            <person name="Ainscough R."/>
            <person name="Almeida J.P."/>
            <person name="Ambrose K.D."/>
            <person name="Anderson F."/>
            <person name="Andrew R.W."/>
            <person name="Ashwell R.I.S."/>
            <person name="Aubin K."/>
            <person name="Babbage A.K."/>
            <person name="Bagguley C.L."/>
            <person name="Bailey J."/>
            <person name="Beasley H."/>
            <person name="Bethel G."/>
            <person name="Bird C.P."/>
            <person name="Bray-Allen S."/>
            <person name="Brown J.Y."/>
            <person name="Brown A.J."/>
            <person name="Buckley D."/>
            <person name="Burton J."/>
            <person name="Bye J."/>
            <person name="Carder C."/>
            <person name="Chapman J.C."/>
            <person name="Clark S.Y."/>
            <person name="Clarke G."/>
            <person name="Clee C."/>
            <person name="Cobley V."/>
            <person name="Collier R.E."/>
            <person name="Corby N."/>
            <person name="Coville G.J."/>
            <person name="Davies J."/>
            <person name="Deadman R."/>
            <person name="Dunn M."/>
            <person name="Earthrowl M."/>
            <person name="Ellington A.G."/>
            <person name="Errington H."/>
            <person name="Frankish A."/>
            <person name="Frankland J."/>
            <person name="French L."/>
            <person name="Garner P."/>
            <person name="Garnett J."/>
            <person name="Gay L."/>
            <person name="Ghori M.R.J."/>
            <person name="Gibson R."/>
            <person name="Gilby L.M."/>
            <person name="Gillett W."/>
            <person name="Glithero R.J."/>
            <person name="Grafham D.V."/>
            <person name="Griffiths C."/>
            <person name="Griffiths-Jones S."/>
            <person name="Grocock R."/>
            <person name="Hammond S."/>
            <person name="Harrison E.S.I."/>
            <person name="Hart E."/>
            <person name="Haugen E."/>
            <person name="Heath P.D."/>
            <person name="Holmes S."/>
            <person name="Holt K."/>
            <person name="Howden P.J."/>
            <person name="Hunt A.R."/>
            <person name="Hunt S.E."/>
            <person name="Hunter G."/>
            <person name="Isherwood J."/>
            <person name="James R."/>
            <person name="Johnson C."/>
            <person name="Johnson D."/>
            <person name="Joy A."/>
            <person name="Kay M."/>
            <person name="Kershaw J.K."/>
            <person name="Kibukawa M."/>
            <person name="Kimberley A.M."/>
            <person name="King A."/>
            <person name="Knights A.J."/>
            <person name="Lad H."/>
            <person name="Laird G."/>
            <person name="Lawlor S."/>
            <person name="Leongamornlert D.A."/>
            <person name="Lloyd D.M."/>
            <person name="Loveland J."/>
            <person name="Lovell J."/>
            <person name="Lush M.J."/>
            <person name="Lyne R."/>
            <person name="Martin S."/>
            <person name="Mashreghi-Mohammadi M."/>
            <person name="Matthews L."/>
            <person name="Matthews N.S.W."/>
            <person name="McLaren S."/>
            <person name="Milne S."/>
            <person name="Mistry S."/>
            <person name="Moore M.J.F."/>
            <person name="Nickerson T."/>
            <person name="O'Dell C.N."/>
            <person name="Oliver K."/>
            <person name="Palmeiri A."/>
            <person name="Palmer S.A."/>
            <person name="Parker A."/>
            <person name="Patel D."/>
            <person name="Pearce A.V."/>
            <person name="Peck A.I."/>
            <person name="Pelan S."/>
            <person name="Phelps K."/>
            <person name="Phillimore B.J."/>
            <person name="Plumb R."/>
            <person name="Rajan J."/>
            <person name="Raymond C."/>
            <person name="Rouse G."/>
            <person name="Saenphimmachak C."/>
            <person name="Sehra H.K."/>
            <person name="Sheridan E."/>
            <person name="Shownkeen R."/>
            <person name="Sims S."/>
            <person name="Skuce C.D."/>
            <person name="Smith M."/>
            <person name="Steward C."/>
            <person name="Subramanian S."/>
            <person name="Sycamore N."/>
            <person name="Tracey A."/>
            <person name="Tromans A."/>
            <person name="Van Helmond Z."/>
            <person name="Wall M."/>
            <person name="Wallis J.M."/>
            <person name="White S."/>
            <person name="Whitehead S.L."/>
            <person name="Wilkinson J.E."/>
            <person name="Willey D.L."/>
            <person name="Williams H."/>
            <person name="Wilming L."/>
            <person name="Wray P.W."/>
            <person name="Wu Z."/>
            <person name="Coulson A."/>
            <person name="Vaudin M."/>
            <person name="Sulston J.E."/>
            <person name="Durbin R.M."/>
            <person name="Hubbard T."/>
            <person name="Wooster R."/>
            <person name="Dunham I."/>
            <person name="Carter N.P."/>
            <person name="McVean G."/>
            <person name="Ross M.T."/>
            <person name="Harrow J."/>
            <person name="Olson M.V."/>
            <person name="Beck S."/>
            <person name="Rogers J."/>
            <person name="Bentley D.R."/>
        </authorList>
    </citation>
    <scope>NUCLEOTIDE SEQUENCE [LARGE SCALE GENOMIC DNA]</scope>
</reference>
<reference key="6">
    <citation type="journal article" date="2004" name="Genome Res.">
        <title>The status, quality, and expansion of the NIH full-length cDNA project: the Mammalian Gene Collection (MGC).</title>
        <authorList>
            <consortium name="The MGC Project Team"/>
        </authorList>
    </citation>
    <scope>NUCLEOTIDE SEQUENCE [LARGE SCALE MRNA] (ISOFORM 1)</scope>
    <scope>NUCLEOTIDE SEQUENCE [LARGE SCALE MRNA] OF 250-683 (ISOFORM 2)</scope>
    <source>
        <tissue>Brain</tissue>
        <tissue>Lung</tissue>
    </source>
</reference>
<reference key="7">
    <citation type="journal article" date="2013" name="PLoS ONE">
        <title>Very long-chain acyl-CoA synthetase 3: overexpression and growth dependence in lung cancer.</title>
        <authorList>
            <person name="Pei Z."/>
            <person name="Fraisl P."/>
            <person name="Shi X."/>
            <person name="Gabrielson E."/>
            <person name="Forss-Petter S."/>
            <person name="Berger J."/>
            <person name="Watkins P.A."/>
        </authorList>
    </citation>
    <scope>FUNCTION</scope>
    <scope>CATALYTIC ACTIVITY</scope>
    <scope>SUBCELLULAR LOCATION</scope>
    <scope>TISSUE SPECIFICITY</scope>
</reference>
<feature type="chain" id="PRO_0000193207" description="Long-chain fatty acid transport protein 3" evidence="3">
    <location>
        <begin position="1"/>
        <end position="683"/>
    </location>
</feature>
<feature type="transmembrane region" description="Helical" evidence="3">
    <location>
        <begin position="3"/>
        <end position="23"/>
    </location>
</feature>
<feature type="region of interest" description="Disordered" evidence="4">
    <location>
        <begin position="119"/>
        <end position="145"/>
    </location>
</feature>
<feature type="compositionally biased region" description="Gly residues" evidence="4">
    <location>
        <begin position="119"/>
        <end position="128"/>
    </location>
</feature>
<feature type="compositionally biased region" description="Low complexity" evidence="4">
    <location>
        <begin position="133"/>
        <end position="145"/>
    </location>
</feature>
<feature type="binding site" evidence="2">
    <location>
        <begin position="288"/>
        <end position="292"/>
    </location>
    <ligand>
        <name>ATP</name>
        <dbReference type="ChEBI" id="CHEBI:30616"/>
    </ligand>
</feature>
<feature type="binding site" evidence="2">
    <location>
        <position position="331"/>
    </location>
    <ligand>
        <name>ATP</name>
        <dbReference type="ChEBI" id="CHEBI:30616"/>
    </ligand>
</feature>
<feature type="binding site" evidence="2">
    <location>
        <position position="428"/>
    </location>
    <ligand>
        <name>ATP</name>
        <dbReference type="ChEBI" id="CHEBI:30616"/>
    </ligand>
</feature>
<feature type="binding site" evidence="2">
    <location>
        <position position="528"/>
    </location>
    <ligand>
        <name>ATP</name>
        <dbReference type="ChEBI" id="CHEBI:30616"/>
    </ligand>
</feature>
<feature type="binding site" evidence="2">
    <location>
        <position position="543"/>
    </location>
    <ligand>
        <name>ATP</name>
        <dbReference type="ChEBI" id="CHEBI:30616"/>
    </ligand>
</feature>
<feature type="binding site" evidence="2">
    <location>
        <position position="635"/>
    </location>
    <ligand>
        <name>ATP</name>
        <dbReference type="ChEBI" id="CHEBI:30616"/>
    </ligand>
</feature>
<feature type="splice variant" id="VSP_036534" description="In isoform 3." evidence="8">
    <original>EFLESLE</original>
    <variation>GKAGAPN</variation>
    <location>
        <begin position="223"/>
        <end position="229"/>
    </location>
</feature>
<feature type="splice variant" id="VSP_036535" description="In isoform 3." evidence="8">
    <location>
        <begin position="230"/>
        <end position="683"/>
    </location>
</feature>
<feature type="splice variant" id="VSP_016218" description="In isoform 2." evidence="6">
    <location>
        <begin position="626"/>
        <end position="660"/>
    </location>
</feature>
<feature type="sequence variant" id="VAR_048241" description="In dbSNP:rs34527123.">
    <original>G</original>
    <variation>A</variation>
    <location>
        <position position="63"/>
    </location>
</feature>
<feature type="sequence variant" id="VAR_048242" description="In dbSNP:rs35102232.">
    <original>R</original>
    <variation>H</variation>
    <location>
        <position position="392"/>
    </location>
</feature>
<feature type="sequence conflict" description="In Ref. 1; CAE12159." evidence="9" ref="1">
    <original>K</original>
    <variation>M</variation>
    <location>
        <position position="19"/>
    </location>
</feature>
<feature type="sequence conflict" description="In Ref. 6; AAH03654." evidence="9" ref="6">
    <original>Y</original>
    <variation>F</variation>
    <location>
        <position position="425"/>
    </location>
</feature>
<name>S27A3_HUMAN</name>
<proteinExistence type="evidence at protein level"/>
<keyword id="KW-0025">Alternative splicing</keyword>
<keyword id="KW-0067">ATP-binding</keyword>
<keyword id="KW-0276">Fatty acid metabolism</keyword>
<keyword id="KW-0436">Ligase</keyword>
<keyword id="KW-0443">Lipid metabolism</keyword>
<keyword id="KW-0445">Lipid transport</keyword>
<keyword id="KW-0472">Membrane</keyword>
<keyword id="KW-0496">Mitochondrion</keyword>
<keyword id="KW-0547">Nucleotide-binding</keyword>
<keyword id="KW-1267">Proteomics identification</keyword>
<keyword id="KW-1185">Reference proteome</keyword>
<keyword id="KW-0812">Transmembrane</keyword>
<keyword id="KW-1133">Transmembrane helix</keyword>
<keyword id="KW-0813">Transport</keyword>
<comment type="function">
    <text evidence="1 5">Mainly functions as an acyl-CoA ligase catalyzing the ATP-dependent formation of fatty acyl-CoA using LCFA and very-long-chain fatty acids (VLCFA) as substrates (PubMed:23936004). Can mediate the levels of long-chain fatty acids (LCFA) in the cell by facilitating their transport across membranes (By similarity).</text>
</comment>
<comment type="catalytic activity">
    <reaction evidence="1">
        <text>a fatty acid(in) = a fatty acid(out)</text>
        <dbReference type="Rhea" id="RHEA:38879"/>
        <dbReference type="ChEBI" id="CHEBI:28868"/>
    </reaction>
</comment>
<comment type="catalytic activity">
    <reaction evidence="5">
        <text>a long-chain fatty acid + ATP + CoA = a long-chain fatty acyl-CoA + AMP + diphosphate</text>
        <dbReference type="Rhea" id="RHEA:15421"/>
        <dbReference type="ChEBI" id="CHEBI:30616"/>
        <dbReference type="ChEBI" id="CHEBI:33019"/>
        <dbReference type="ChEBI" id="CHEBI:57287"/>
        <dbReference type="ChEBI" id="CHEBI:57560"/>
        <dbReference type="ChEBI" id="CHEBI:83139"/>
        <dbReference type="ChEBI" id="CHEBI:456215"/>
        <dbReference type="EC" id="6.2.1.3"/>
    </reaction>
    <physiologicalReaction direction="left-to-right" evidence="5">
        <dbReference type="Rhea" id="RHEA:15422"/>
    </physiologicalReaction>
</comment>
<comment type="catalytic activity">
    <reaction evidence="5">
        <text>hexadecanoate + ATP + CoA = hexadecanoyl-CoA + AMP + diphosphate</text>
        <dbReference type="Rhea" id="RHEA:30751"/>
        <dbReference type="ChEBI" id="CHEBI:7896"/>
        <dbReference type="ChEBI" id="CHEBI:30616"/>
        <dbReference type="ChEBI" id="CHEBI:33019"/>
        <dbReference type="ChEBI" id="CHEBI:57287"/>
        <dbReference type="ChEBI" id="CHEBI:57379"/>
        <dbReference type="ChEBI" id="CHEBI:456215"/>
    </reaction>
    <physiologicalReaction direction="left-to-right" evidence="5">
        <dbReference type="Rhea" id="RHEA:30752"/>
    </physiologicalReaction>
</comment>
<comment type="catalytic activity">
    <reaction evidence="5">
        <text>(9Z)-octadecenoate + ATP + CoA = (9Z)-octadecenoyl-CoA + AMP + diphosphate</text>
        <dbReference type="Rhea" id="RHEA:33607"/>
        <dbReference type="ChEBI" id="CHEBI:30616"/>
        <dbReference type="ChEBI" id="CHEBI:30823"/>
        <dbReference type="ChEBI" id="CHEBI:33019"/>
        <dbReference type="ChEBI" id="CHEBI:57287"/>
        <dbReference type="ChEBI" id="CHEBI:57387"/>
        <dbReference type="ChEBI" id="CHEBI:456215"/>
    </reaction>
    <physiologicalReaction direction="left-to-right" evidence="5">
        <dbReference type="Rhea" id="RHEA:33608"/>
    </physiologicalReaction>
</comment>
<comment type="catalytic activity">
    <reaction evidence="5">
        <text>(9Z,12Z)-octadecadienoate + ATP + CoA = (9Z,12Z)-octadecadienoyl-CoA + AMP + diphosphate</text>
        <dbReference type="Rhea" id="RHEA:33651"/>
        <dbReference type="ChEBI" id="CHEBI:30245"/>
        <dbReference type="ChEBI" id="CHEBI:30616"/>
        <dbReference type="ChEBI" id="CHEBI:33019"/>
        <dbReference type="ChEBI" id="CHEBI:57287"/>
        <dbReference type="ChEBI" id="CHEBI:57383"/>
        <dbReference type="ChEBI" id="CHEBI:456215"/>
    </reaction>
    <physiologicalReaction direction="left-to-right" evidence="5">
        <dbReference type="Rhea" id="RHEA:33652"/>
    </physiologicalReaction>
</comment>
<comment type="catalytic activity">
    <reaction evidence="5">
        <text>(5Z,8Z,11Z,14Z)-eicosatetraenoate + ATP + CoA = (5Z,8Z,11Z,14Z)-eicosatetraenoyl-CoA + AMP + diphosphate</text>
        <dbReference type="Rhea" id="RHEA:19713"/>
        <dbReference type="ChEBI" id="CHEBI:30616"/>
        <dbReference type="ChEBI" id="CHEBI:32395"/>
        <dbReference type="ChEBI" id="CHEBI:33019"/>
        <dbReference type="ChEBI" id="CHEBI:57287"/>
        <dbReference type="ChEBI" id="CHEBI:57368"/>
        <dbReference type="ChEBI" id="CHEBI:456215"/>
        <dbReference type="EC" id="6.2.1.15"/>
    </reaction>
    <physiologicalReaction direction="left-to-right" evidence="5">
        <dbReference type="Rhea" id="RHEA:19714"/>
    </physiologicalReaction>
</comment>
<comment type="catalytic activity">
    <reaction evidence="1">
        <text>a very long-chain fatty acid + ATP + CoA = a very long-chain fatty acyl-CoA + AMP + diphosphate</text>
        <dbReference type="Rhea" id="RHEA:54536"/>
        <dbReference type="ChEBI" id="CHEBI:30616"/>
        <dbReference type="ChEBI" id="CHEBI:33019"/>
        <dbReference type="ChEBI" id="CHEBI:57287"/>
        <dbReference type="ChEBI" id="CHEBI:58950"/>
        <dbReference type="ChEBI" id="CHEBI:138261"/>
        <dbReference type="ChEBI" id="CHEBI:456215"/>
    </reaction>
    <physiologicalReaction direction="left-to-right" evidence="1">
        <dbReference type="Rhea" id="RHEA:54537"/>
    </physiologicalReaction>
</comment>
<comment type="catalytic activity">
    <reaction evidence="1">
        <text>tetracosanoate + ATP + CoA = tetracosanoyl-CoA + AMP + diphosphate</text>
        <dbReference type="Rhea" id="RHEA:33639"/>
        <dbReference type="ChEBI" id="CHEBI:30616"/>
        <dbReference type="ChEBI" id="CHEBI:31014"/>
        <dbReference type="ChEBI" id="CHEBI:33019"/>
        <dbReference type="ChEBI" id="CHEBI:57287"/>
        <dbReference type="ChEBI" id="CHEBI:65052"/>
        <dbReference type="ChEBI" id="CHEBI:456215"/>
    </reaction>
    <physiologicalReaction direction="left-to-right" evidence="1">
        <dbReference type="Rhea" id="RHEA:33640"/>
    </physiologicalReaction>
</comment>
<comment type="subcellular location">
    <subcellularLocation>
        <location evidence="5">Mitochondrion membrane</location>
        <topology evidence="3">Single-pass membrane protein</topology>
    </subcellularLocation>
</comment>
<comment type="alternative products">
    <event type="alternative splicing"/>
    <isoform>
        <id>Q5K4L6-1</id>
        <name>1</name>
        <sequence type="displayed"/>
    </isoform>
    <isoform>
        <id>Q5K4L6-2</id>
        <name>2</name>
        <sequence type="described" ref="VSP_016218"/>
    </isoform>
    <isoform>
        <id>Q5K4L6-3</id>
        <name>3</name>
        <sequence type="described" ref="VSP_036534 VSP_036535"/>
    </isoform>
</comment>
<comment type="tissue specificity">
    <text evidence="5">Expressed in bronchial and bronchiolar epithelial cells (at protein level).</text>
</comment>
<comment type="similarity">
    <text evidence="9">Belongs to the ATP-dependent AMP-binding enzyme family.</text>
</comment>
<comment type="sequence caution" evidence="9">
    <conflict type="erroneous initiation">
        <sequence resource="EMBL-CDS" id="AAH03041"/>
    </conflict>
    <text>Extended N-terminus.</text>
</comment>
<comment type="sequence caution" evidence="9">
    <conflict type="erroneous initiation">
        <sequence resource="EMBL-CDS" id="AAH09916"/>
    </conflict>
    <text>Extended N-terminus.</text>
</comment>
<comment type="sequence caution" evidence="9">
    <conflict type="erroneous initiation">
        <sequence resource="EMBL-CDS" id="AAH29792"/>
    </conflict>
    <text>Extended N-terminus.</text>
</comment>
<comment type="sequence caution" evidence="9">
    <conflict type="erroneous initiation">
        <sequence resource="EMBL-CDS" id="AAQ88775"/>
    </conflict>
    <text>Extended N-terminus.</text>
</comment>
<comment type="sequence caution" evidence="9">
    <conflict type="erroneous initiation">
        <sequence resource="EMBL-CDS" id="BAB55156"/>
    </conflict>
    <text>Extended N-terminus.</text>
</comment>
<comment type="sequence caution" evidence="9">
    <conflict type="erroneous initiation">
        <sequence resource="EMBL-CDS" id="BAB84960"/>
    </conflict>
    <text>Extended N-terminus.</text>
</comment>
<comment type="sequence caution" evidence="9">
    <conflict type="erroneous initiation">
        <sequence resource="EMBL-CDS" id="BAC11578"/>
    </conflict>
    <text>Extended N-terminus.</text>
</comment>
<comment type="sequence caution" evidence="9">
    <conflict type="erroneous initiation">
        <sequence resource="EMBL-CDS" id="BAC86050"/>
    </conflict>
    <text>Extended N-terminus.</text>
</comment>
<comment type="sequence caution" evidence="9">
    <conflict type="frameshift">
        <sequence resource="EMBL-CDS" id="BAC86050"/>
    </conflict>
</comment>
<comment type="sequence caution" evidence="9">
    <conflict type="erroneous initiation">
        <sequence resource="EMBL-CDS" id="CAE12159"/>
    </conflict>
    <text>Extended N-terminus.</text>
</comment>
<sequence>MAALLLLPLLLLLPLLLLKLHLWPQLRWLPADLAFAVRALCCKRALRARALAAAAADPEGPEGGCSLAWRLAELAQQRAAHTFLIHGSRRFSYSEAERESNRAARAFLRALGWDWGPDGGDSGEGSAGEGERAAPGAGDAAAGSGAEFAGGDGAARGGGAAAPLSPGATVALLLPAGPEFLWLWFGLAKAGLRTAFVPTALRRGPLLHCLRSCGARALVLAPEFLESLEPDLPALRAMGLHLWAAGPGTHPAGISDLLAEVSAEVDGPVPGYLSSPQSITDTCLYIFTSGTTGLPKAARISHLKILQCQGFYQLCGVHQEDVIYLALPLYHMSGSLLGIVGCMGIGATVVLKSKFSAGQFWEDCQQHRVTVFQYIGELCRYLVNQPPSKAERGHKVRLAVGSGLRPDTWERFVRRFGPLQVLETYGLTEGNVATINYTGQRGAVGRASWLYKHIFPFSLIRYDVTTGEPIRDPQGHCMATSPGEPGLLVAPVSQQSPFLGYAGGPELAQGKLLKDVFRPGDVFFNTGDLLVCDDQGFLRFHDRTGDTFRWKGENVATTEVAEVFEALDFLQEVNVYGVTVPGHEGRAGMAALVLRPPHALDLMQLYTHVSENLPPYARPRFLRLQESLATTETFKQQKVRMANEGFDPSTLSDPLYVLDQAVGAYLPLTTARYSALLAGNLRI</sequence>
<protein>
    <recommendedName>
        <fullName evidence="1">Long-chain fatty acid transport protein 3</fullName>
        <shortName evidence="1">FATP-3</shortName>
        <shortName evidence="1">Fatty acid transport protein 3</shortName>
    </recommendedName>
    <alternativeName>
        <fullName evidence="7">Arachidonate--CoA ligase</fullName>
        <ecNumber evidence="5">6.2.1.15</ecNumber>
    </alternativeName>
    <alternativeName>
        <fullName>Long-chain-fatty-acid--CoA ligase</fullName>
        <ecNumber evidence="5">6.2.1.3</ecNumber>
    </alternativeName>
    <alternativeName>
        <fullName evidence="11">Solute carrier family 27 member 3</fullName>
    </alternativeName>
    <alternativeName>
        <fullName evidence="10">Very long-chain acyl-CoA synthetase homolog 3</fullName>
        <shortName evidence="10">VLCS-3</shortName>
        <ecNumber evidence="1">6.2.1.-</ecNumber>
    </alternativeName>
</protein>
<gene>
    <name evidence="11" type="primary">SLC27A3</name>
    <name evidence="7" type="synonym">ACSVL3</name>
    <name type="synonym">FATP3</name>
    <name type="ORF">PSEC0067</name>
    <name type="ORF">UNQ367/PRO703</name>
</gene>
<evidence type="ECO:0000250" key="1">
    <source>
        <dbReference type="UniProtKB" id="O88561"/>
    </source>
</evidence>
<evidence type="ECO:0000250" key="2">
    <source>
        <dbReference type="UniProtKB" id="Q9SMT7"/>
    </source>
</evidence>
<evidence type="ECO:0000255" key="3"/>
<evidence type="ECO:0000256" key="4">
    <source>
        <dbReference type="SAM" id="MobiDB-lite"/>
    </source>
</evidence>
<evidence type="ECO:0000269" key="5">
    <source>
    </source>
</evidence>
<evidence type="ECO:0000303" key="6">
    <source>
    </source>
</evidence>
<evidence type="ECO:0000303" key="7">
    <source>
    </source>
</evidence>
<evidence type="ECO:0000303" key="8">
    <source ref="2"/>
</evidence>
<evidence type="ECO:0000305" key="9"/>
<evidence type="ECO:0000312" key="10">
    <source>
        <dbReference type="EMBL" id="CAE12159.1"/>
    </source>
</evidence>
<evidence type="ECO:0000312" key="11">
    <source>
        <dbReference type="HGNC" id="HGNC:10997"/>
    </source>
</evidence>
<organism>
    <name type="scientific">Homo sapiens</name>
    <name type="common">Human</name>
    <dbReference type="NCBI Taxonomy" id="9606"/>
    <lineage>
        <taxon>Eukaryota</taxon>
        <taxon>Metazoa</taxon>
        <taxon>Chordata</taxon>
        <taxon>Craniata</taxon>
        <taxon>Vertebrata</taxon>
        <taxon>Euteleostomi</taxon>
        <taxon>Mammalia</taxon>
        <taxon>Eutheria</taxon>
        <taxon>Euarchontoglires</taxon>
        <taxon>Primates</taxon>
        <taxon>Haplorrhini</taxon>
        <taxon>Catarrhini</taxon>
        <taxon>Hominidae</taxon>
        <taxon>Homo</taxon>
    </lineage>
</organism>
<accession>Q5K4L6</accession>
<accession>Q5VUQ7</accession>
<accession>Q5VUQ8</accession>
<accession>Q5VUR3</accession>
<accession>Q6ZV16</accession>
<accession>Q8N2X7</accession>
<accession>Q8TEJ0</accession>
<accession>Q96SW5</accession>
<accession>Q9BTJ5</accession>
<accession>Q9BTY5</accession>
<dbReference type="EC" id="6.2.1.15" evidence="5"/>
<dbReference type="EC" id="6.2.1.3" evidence="5"/>
<dbReference type="EC" id="6.2.1.-" evidence="1"/>
<dbReference type="EMBL" id="AJ577572">
    <property type="protein sequence ID" value="CAE12159.1"/>
    <property type="status" value="ALT_INIT"/>
    <property type="molecule type" value="mRNA"/>
</dbReference>
<dbReference type="EMBL" id="AK074134">
    <property type="protein sequence ID" value="BAB84960.1"/>
    <property type="status" value="ALT_INIT"/>
    <property type="molecule type" value="mRNA"/>
</dbReference>
<dbReference type="EMBL" id="AY358409">
    <property type="protein sequence ID" value="AAQ88775.1"/>
    <property type="status" value="ALT_INIT"/>
    <property type="molecule type" value="mRNA"/>
</dbReference>
<dbReference type="EMBL" id="AK027499">
    <property type="protein sequence ID" value="BAB55156.1"/>
    <property type="status" value="ALT_INIT"/>
    <property type="molecule type" value="mRNA"/>
</dbReference>
<dbReference type="EMBL" id="AK075377">
    <property type="protein sequence ID" value="BAC11578.1"/>
    <property type="status" value="ALT_INIT"/>
    <property type="molecule type" value="mRNA"/>
</dbReference>
<dbReference type="EMBL" id="AK125102">
    <property type="protein sequence ID" value="BAC86050.1"/>
    <property type="status" value="ALT_SEQ"/>
    <property type="molecule type" value="mRNA"/>
</dbReference>
<dbReference type="EMBL" id="AL513523">
    <property type="status" value="NOT_ANNOTATED_CDS"/>
    <property type="molecule type" value="Genomic_DNA"/>
</dbReference>
<dbReference type="EMBL" id="BC003041">
    <property type="protein sequence ID" value="AAH03041.1"/>
    <property type="status" value="ALT_INIT"/>
    <property type="molecule type" value="mRNA"/>
</dbReference>
<dbReference type="EMBL" id="BC003654">
    <property type="protein sequence ID" value="AAH03654.2"/>
    <property type="molecule type" value="mRNA"/>
</dbReference>
<dbReference type="EMBL" id="BC009916">
    <property type="protein sequence ID" value="AAH09916.1"/>
    <property type="status" value="ALT_INIT"/>
    <property type="molecule type" value="mRNA"/>
</dbReference>
<dbReference type="EMBL" id="BC029792">
    <property type="protein sequence ID" value="AAH29792.1"/>
    <property type="status" value="ALT_INIT"/>
    <property type="molecule type" value="mRNA"/>
</dbReference>
<dbReference type="CCDS" id="CCDS1053.3">
    <molecule id="Q5K4L6-1"/>
</dbReference>
<dbReference type="RefSeq" id="NP_001304858.3">
    <molecule id="Q5K4L6-2"/>
    <property type="nucleotide sequence ID" value="NM_001317929.4"/>
</dbReference>
<dbReference type="RefSeq" id="NP_077306.3">
    <molecule id="Q5K4L6-1"/>
    <property type="nucleotide sequence ID" value="NM_024330.4"/>
</dbReference>
<dbReference type="SMR" id="Q5K4L6"/>
<dbReference type="BioGRID" id="116193">
    <property type="interactions" value="137"/>
</dbReference>
<dbReference type="FunCoup" id="Q5K4L6">
    <property type="interactions" value="464"/>
</dbReference>
<dbReference type="IntAct" id="Q5K4L6">
    <property type="interactions" value="68"/>
</dbReference>
<dbReference type="MINT" id="Q5K4L6"/>
<dbReference type="STRING" id="9606.ENSP00000271857"/>
<dbReference type="SwissLipids" id="SLP:000001267"/>
<dbReference type="TCDB" id="4.C.1.1.12">
    <property type="family name" value="the fatty acid group translocation (fat) family"/>
</dbReference>
<dbReference type="GlyGen" id="Q5K4L6">
    <property type="glycosylation" value="1 site, 1 O-linked glycan (1 site)"/>
</dbReference>
<dbReference type="iPTMnet" id="Q5K4L6"/>
<dbReference type="PhosphoSitePlus" id="Q5K4L6"/>
<dbReference type="SwissPalm" id="Q5K4L6"/>
<dbReference type="BioMuta" id="SLC27A3"/>
<dbReference type="DMDM" id="215274206"/>
<dbReference type="jPOST" id="Q5K4L6"/>
<dbReference type="MassIVE" id="Q5K4L6"/>
<dbReference type="PaxDb" id="9606-ENSP00000485061"/>
<dbReference type="PeptideAtlas" id="Q5K4L6"/>
<dbReference type="ProteomicsDB" id="63544">
    <molecule id="Q5K4L6-1"/>
</dbReference>
<dbReference type="ProteomicsDB" id="63545">
    <molecule id="Q5K4L6-2"/>
</dbReference>
<dbReference type="ProteomicsDB" id="63546">
    <molecule id="Q5K4L6-3"/>
</dbReference>
<dbReference type="Pumba" id="Q5K4L6"/>
<dbReference type="Antibodypedia" id="1669">
    <property type="antibodies" value="127 antibodies from 22 providers"/>
</dbReference>
<dbReference type="CPTC" id="Q5K4L6">
    <property type="antibodies" value="4 antibodies"/>
</dbReference>
<dbReference type="DNASU" id="11000"/>
<dbReference type="Ensembl" id="ENST00000623839.3">
    <property type="protein sequence ID" value="ENSP00000485585.1"/>
    <property type="gene ID" value="ENSG00000263163.5"/>
</dbReference>
<dbReference type="Ensembl" id="ENST00000624995.4">
    <molecule id="Q5K4L6-1"/>
    <property type="protein sequence ID" value="ENSP00000485061.2"/>
    <property type="gene ID" value="ENSG00000143554.14"/>
</dbReference>
<dbReference type="GeneID" id="11000"/>
<dbReference type="KEGG" id="hsa:11000"/>
<dbReference type="MANE-Select" id="ENST00000624995.4">
    <property type="protein sequence ID" value="ENSP00000485061.2"/>
    <property type="RefSeq nucleotide sequence ID" value="NM_024330.4"/>
    <property type="RefSeq protein sequence ID" value="NP_077306.3"/>
</dbReference>
<dbReference type="UCSC" id="uc001fcz.3">
    <molecule id="Q5K4L6-1"/>
    <property type="organism name" value="human"/>
</dbReference>
<dbReference type="AGR" id="HGNC:10997"/>
<dbReference type="CTD" id="11000"/>
<dbReference type="DisGeNET" id="11000"/>
<dbReference type="GeneCards" id="SLC27A3"/>
<dbReference type="HGNC" id="HGNC:10997">
    <property type="gene designation" value="SLC27A3"/>
</dbReference>
<dbReference type="HPA" id="ENSG00000143554">
    <property type="expression patterns" value="Low tissue specificity"/>
</dbReference>
<dbReference type="MIM" id="604193">
    <property type="type" value="gene"/>
</dbReference>
<dbReference type="neXtProt" id="NX_Q5K4L6"/>
<dbReference type="OpenTargets" id="ENSG00000143554"/>
<dbReference type="PharmGKB" id="PA35871"/>
<dbReference type="VEuPathDB" id="HostDB:ENSG00000143554"/>
<dbReference type="eggNOG" id="KOG1179">
    <property type="taxonomic scope" value="Eukaryota"/>
</dbReference>
<dbReference type="GeneTree" id="ENSGT00940000161073"/>
<dbReference type="HOGENOM" id="CLU_000022_46_2_1"/>
<dbReference type="InParanoid" id="Q5K4L6"/>
<dbReference type="OrthoDB" id="288590at2759"/>
<dbReference type="PAN-GO" id="Q5K4L6">
    <property type="GO annotations" value="4 GO annotations based on evolutionary models"/>
</dbReference>
<dbReference type="PhylomeDB" id="Q5K4L6"/>
<dbReference type="TreeFam" id="TF313430"/>
<dbReference type="PathwayCommons" id="Q5K4L6"/>
<dbReference type="Reactome" id="R-HSA-75876">
    <property type="pathway name" value="Synthesis of very long-chain fatty acyl-CoAs"/>
</dbReference>
<dbReference type="SignaLink" id="Q5K4L6"/>
<dbReference type="SIGNOR" id="Q5K4L6"/>
<dbReference type="BioGRID-ORCS" id="11000">
    <property type="hits" value="10 hits in 1118 CRISPR screens"/>
</dbReference>
<dbReference type="ChiTaRS" id="SLC27A3">
    <property type="organism name" value="human"/>
</dbReference>
<dbReference type="GeneWiki" id="SLC27A3"/>
<dbReference type="GenomeRNAi" id="11000"/>
<dbReference type="Pharos" id="Q5K4L6">
    <property type="development level" value="Tbio"/>
</dbReference>
<dbReference type="PRO" id="PR:Q5K4L6"/>
<dbReference type="Proteomes" id="UP000005640">
    <property type="component" value="Chromosome 1"/>
</dbReference>
<dbReference type="RNAct" id="Q5K4L6">
    <property type="molecule type" value="protein"/>
</dbReference>
<dbReference type="Bgee" id="ENSG00000143554">
    <property type="expression patterns" value="Expressed in granulocyte and 95 other cell types or tissues"/>
</dbReference>
<dbReference type="ExpressionAtlas" id="Q5K4L6">
    <property type="expression patterns" value="baseline and differential"/>
</dbReference>
<dbReference type="GO" id="GO:0005783">
    <property type="term" value="C:endoplasmic reticulum"/>
    <property type="evidence" value="ECO:0000314"/>
    <property type="project" value="HPA"/>
</dbReference>
<dbReference type="GO" id="GO:0005789">
    <property type="term" value="C:endoplasmic reticulum membrane"/>
    <property type="evidence" value="ECO:0000318"/>
    <property type="project" value="GO_Central"/>
</dbReference>
<dbReference type="GO" id="GO:0016020">
    <property type="term" value="C:membrane"/>
    <property type="evidence" value="ECO:0007005"/>
    <property type="project" value="UniProtKB"/>
</dbReference>
<dbReference type="GO" id="GO:0031966">
    <property type="term" value="C:mitochondrial membrane"/>
    <property type="evidence" value="ECO:0007669"/>
    <property type="project" value="UniProtKB-SubCell"/>
</dbReference>
<dbReference type="GO" id="GO:0005739">
    <property type="term" value="C:mitochondrion"/>
    <property type="evidence" value="ECO:0000314"/>
    <property type="project" value="HPA"/>
</dbReference>
<dbReference type="GO" id="GO:0005886">
    <property type="term" value="C:plasma membrane"/>
    <property type="evidence" value="ECO:0000318"/>
    <property type="project" value="GO_Central"/>
</dbReference>
<dbReference type="GO" id="GO:0047676">
    <property type="term" value="F:arachidonate-CoA ligase activity"/>
    <property type="evidence" value="ECO:0007669"/>
    <property type="project" value="UniProtKB-EC"/>
</dbReference>
<dbReference type="GO" id="GO:0005524">
    <property type="term" value="F:ATP binding"/>
    <property type="evidence" value="ECO:0007669"/>
    <property type="project" value="UniProtKB-KW"/>
</dbReference>
<dbReference type="GO" id="GO:0004467">
    <property type="term" value="F:long-chain fatty acid-CoA ligase activity"/>
    <property type="evidence" value="ECO:0000314"/>
    <property type="project" value="UniProtKB"/>
</dbReference>
<dbReference type="GO" id="GO:0031957">
    <property type="term" value="F:very long-chain fatty acid-CoA ligase activity"/>
    <property type="evidence" value="ECO:0000314"/>
    <property type="project" value="UniProtKB"/>
</dbReference>
<dbReference type="GO" id="GO:0015908">
    <property type="term" value="P:fatty acid transport"/>
    <property type="evidence" value="ECO:0000315"/>
    <property type="project" value="ARUK-UCL"/>
</dbReference>
<dbReference type="GO" id="GO:0001676">
    <property type="term" value="P:long-chain fatty acid metabolic process"/>
    <property type="evidence" value="ECO:0000314"/>
    <property type="project" value="UniProtKB"/>
</dbReference>
<dbReference type="CDD" id="cd05938">
    <property type="entry name" value="hsFATP2a_ACSVL_like"/>
    <property type="match status" value="1"/>
</dbReference>
<dbReference type="FunFam" id="3.30.300.30:FF:000002">
    <property type="entry name" value="Long-chain fatty acid transport protein 1"/>
    <property type="match status" value="1"/>
</dbReference>
<dbReference type="Gene3D" id="3.30.300.30">
    <property type="match status" value="1"/>
</dbReference>
<dbReference type="Gene3D" id="3.40.50.12780">
    <property type="entry name" value="N-terminal domain of ligase-like"/>
    <property type="match status" value="1"/>
</dbReference>
<dbReference type="InterPro" id="IPR025110">
    <property type="entry name" value="AMP-bd_C"/>
</dbReference>
<dbReference type="InterPro" id="IPR045851">
    <property type="entry name" value="AMP-bd_C_sf"/>
</dbReference>
<dbReference type="InterPro" id="IPR020845">
    <property type="entry name" value="AMP-binding_CS"/>
</dbReference>
<dbReference type="InterPro" id="IPR000873">
    <property type="entry name" value="AMP-dep_synth/lig_dom"/>
</dbReference>
<dbReference type="InterPro" id="IPR042099">
    <property type="entry name" value="ANL_N_sf"/>
</dbReference>
<dbReference type="PANTHER" id="PTHR43107">
    <property type="entry name" value="LONG-CHAIN FATTY ACID TRANSPORT PROTEIN"/>
    <property type="match status" value="1"/>
</dbReference>
<dbReference type="PANTHER" id="PTHR43107:SF12">
    <property type="entry name" value="LONG-CHAIN FATTY ACID TRANSPORT PROTEIN 3"/>
    <property type="match status" value="1"/>
</dbReference>
<dbReference type="Pfam" id="PF00501">
    <property type="entry name" value="AMP-binding"/>
    <property type="match status" value="1"/>
</dbReference>
<dbReference type="Pfam" id="PF13193">
    <property type="entry name" value="AMP-binding_C"/>
    <property type="match status" value="1"/>
</dbReference>
<dbReference type="SUPFAM" id="SSF56801">
    <property type="entry name" value="Acetyl-CoA synthetase-like"/>
    <property type="match status" value="1"/>
</dbReference>
<dbReference type="PROSITE" id="PS00455">
    <property type="entry name" value="AMP_BINDING"/>
    <property type="match status" value="1"/>
</dbReference>